<evidence type="ECO:0000255" key="1">
    <source>
        <dbReference type="HAMAP-Rule" id="MF_00528"/>
    </source>
</evidence>
<name>NTPP_LEGPC</name>
<organism>
    <name type="scientific">Legionella pneumophila (strain Corby)</name>
    <dbReference type="NCBI Taxonomy" id="400673"/>
    <lineage>
        <taxon>Bacteria</taxon>
        <taxon>Pseudomonadati</taxon>
        <taxon>Pseudomonadota</taxon>
        <taxon>Gammaproteobacteria</taxon>
        <taxon>Legionellales</taxon>
        <taxon>Legionellaceae</taxon>
        <taxon>Legionella</taxon>
    </lineage>
</organism>
<accession>A5IDM1</accession>
<comment type="function">
    <text evidence="1">Nucleoside triphosphate pyrophosphatase. May have a dual role in cell division arrest and in preventing the incorporation of modified nucleotides into cellular nucleic acids.</text>
</comment>
<comment type="catalytic activity">
    <reaction evidence="1">
        <text>a ribonucleoside 5'-triphosphate + H2O = a ribonucleoside 5'-phosphate + diphosphate + H(+)</text>
        <dbReference type="Rhea" id="RHEA:23996"/>
        <dbReference type="ChEBI" id="CHEBI:15377"/>
        <dbReference type="ChEBI" id="CHEBI:15378"/>
        <dbReference type="ChEBI" id="CHEBI:33019"/>
        <dbReference type="ChEBI" id="CHEBI:58043"/>
        <dbReference type="ChEBI" id="CHEBI:61557"/>
        <dbReference type="EC" id="3.6.1.9"/>
    </reaction>
</comment>
<comment type="catalytic activity">
    <reaction evidence="1">
        <text>a 2'-deoxyribonucleoside 5'-triphosphate + H2O = a 2'-deoxyribonucleoside 5'-phosphate + diphosphate + H(+)</text>
        <dbReference type="Rhea" id="RHEA:44644"/>
        <dbReference type="ChEBI" id="CHEBI:15377"/>
        <dbReference type="ChEBI" id="CHEBI:15378"/>
        <dbReference type="ChEBI" id="CHEBI:33019"/>
        <dbReference type="ChEBI" id="CHEBI:61560"/>
        <dbReference type="ChEBI" id="CHEBI:65317"/>
        <dbReference type="EC" id="3.6.1.9"/>
    </reaction>
</comment>
<comment type="cofactor">
    <cofactor evidence="1">
        <name>a divalent metal cation</name>
        <dbReference type="ChEBI" id="CHEBI:60240"/>
    </cofactor>
</comment>
<comment type="subcellular location">
    <subcellularLocation>
        <location evidence="1">Cytoplasm</location>
    </subcellularLocation>
</comment>
<comment type="similarity">
    <text evidence="1">Belongs to the Maf family.</text>
</comment>
<proteinExistence type="inferred from homology"/>
<gene>
    <name type="ordered locus">LPC_1522</name>
</gene>
<keyword id="KW-0963">Cytoplasm</keyword>
<keyword id="KW-0378">Hydrolase</keyword>
<keyword id="KW-0546">Nucleotide metabolism</keyword>
<protein>
    <recommendedName>
        <fullName evidence="1">Nucleoside triphosphate pyrophosphatase</fullName>
        <ecNumber evidence="1">3.6.1.9</ecNumber>
    </recommendedName>
    <alternativeName>
        <fullName evidence="1">Nucleotide pyrophosphatase</fullName>
        <shortName evidence="1">Nucleotide PPase</shortName>
    </alternativeName>
</protein>
<feature type="chain" id="PRO_1000060943" description="Nucleoside triphosphate pyrophosphatase">
    <location>
        <begin position="1"/>
        <end position="200"/>
    </location>
</feature>
<feature type="active site" description="Proton acceptor" evidence="1">
    <location>
        <position position="79"/>
    </location>
</feature>
<dbReference type="EC" id="3.6.1.9" evidence="1"/>
<dbReference type="EMBL" id="CP000675">
    <property type="protein sequence ID" value="ABQ55471.1"/>
    <property type="molecule type" value="Genomic_DNA"/>
</dbReference>
<dbReference type="RefSeq" id="WP_011946935.1">
    <property type="nucleotide sequence ID" value="NZ_JAPMSS010000011.1"/>
</dbReference>
<dbReference type="SMR" id="A5IDM1"/>
<dbReference type="KEGG" id="lpc:LPC_1522"/>
<dbReference type="HOGENOM" id="CLU_040416_1_1_6"/>
<dbReference type="GO" id="GO:0005737">
    <property type="term" value="C:cytoplasm"/>
    <property type="evidence" value="ECO:0007669"/>
    <property type="project" value="UniProtKB-SubCell"/>
</dbReference>
<dbReference type="GO" id="GO:0047429">
    <property type="term" value="F:nucleoside triphosphate diphosphatase activity"/>
    <property type="evidence" value="ECO:0007669"/>
    <property type="project" value="UniProtKB-EC"/>
</dbReference>
<dbReference type="GO" id="GO:0009117">
    <property type="term" value="P:nucleotide metabolic process"/>
    <property type="evidence" value="ECO:0007669"/>
    <property type="project" value="UniProtKB-KW"/>
</dbReference>
<dbReference type="CDD" id="cd00555">
    <property type="entry name" value="Maf"/>
    <property type="match status" value="1"/>
</dbReference>
<dbReference type="Gene3D" id="3.90.950.10">
    <property type="match status" value="1"/>
</dbReference>
<dbReference type="HAMAP" id="MF_00528">
    <property type="entry name" value="Maf"/>
    <property type="match status" value="1"/>
</dbReference>
<dbReference type="InterPro" id="IPR029001">
    <property type="entry name" value="ITPase-like_fam"/>
</dbReference>
<dbReference type="InterPro" id="IPR003697">
    <property type="entry name" value="Maf-like"/>
</dbReference>
<dbReference type="NCBIfam" id="TIGR00172">
    <property type="entry name" value="maf"/>
    <property type="match status" value="1"/>
</dbReference>
<dbReference type="PANTHER" id="PTHR43213">
    <property type="entry name" value="BIFUNCTIONAL DTTP/UTP PYROPHOSPHATASE/METHYLTRANSFERASE PROTEIN-RELATED"/>
    <property type="match status" value="1"/>
</dbReference>
<dbReference type="PANTHER" id="PTHR43213:SF5">
    <property type="entry name" value="BIFUNCTIONAL DTTP_UTP PYROPHOSPHATASE_METHYLTRANSFERASE PROTEIN-RELATED"/>
    <property type="match status" value="1"/>
</dbReference>
<dbReference type="Pfam" id="PF02545">
    <property type="entry name" value="Maf"/>
    <property type="match status" value="1"/>
</dbReference>
<dbReference type="PIRSF" id="PIRSF006305">
    <property type="entry name" value="Maf"/>
    <property type="match status" value="1"/>
</dbReference>
<dbReference type="SUPFAM" id="SSF52972">
    <property type="entry name" value="ITPase-like"/>
    <property type="match status" value="1"/>
</dbReference>
<sequence>MSKFLQQKPIILASSSTIRHKLMKSLGLDFLVLPSNCNEEEIKTRHKSDELVELGITLAKIKALDVSQHYPEHYIIAADQLCVAGKRVFNKPLNHQTAVSHLRELSGKQHQQIACLCIVKESKILWQYHETATLTLHHLSEKTIEAYLQAEKPYQSCGAYQYEGLGKWLFKEVQGSEDTILGLPLMPLVNALVNLKVVGI</sequence>
<reference key="1">
    <citation type="submission" date="2006-11" db="EMBL/GenBank/DDBJ databases">
        <title>Identification and characterization of a new conjugation/ type IVA secretion system (trb/tra) of L. pneumophila Corby localized on a mobile genomic island.</title>
        <authorList>
            <person name="Gloeckner G."/>
            <person name="Albert-Weissenberger C."/>
            <person name="Weinmann E."/>
            <person name="Jacobi S."/>
            <person name="Schunder E."/>
            <person name="Steinert M."/>
            <person name="Buchrieser C."/>
            <person name="Hacker J."/>
            <person name="Heuner K."/>
        </authorList>
    </citation>
    <scope>NUCLEOTIDE SEQUENCE [LARGE SCALE GENOMIC DNA]</scope>
    <source>
        <strain>Corby</strain>
    </source>
</reference>